<reference key="1">
    <citation type="journal article" date="1998" name="J. Bone Miner. Res.">
        <title>Mesenchymal stem cell surface antigen SB-10 corresponds to activated leukocyte cell adhesion molecule and is involved in osteogenic differentiation.</title>
        <authorList>
            <person name="Bruder S.P."/>
            <person name="Ricalton N.S."/>
            <person name="Boynton R.E."/>
            <person name="Connolly T.J."/>
            <person name="Jaiswal N."/>
            <person name="Zaia J."/>
            <person name="Barry F.P."/>
        </authorList>
    </citation>
    <scope>NUCLEOTIDE SEQUENCE [MRNA]</scope>
    <source>
        <tissue>Mesenchymal cell</tissue>
    </source>
</reference>
<keyword id="KW-1064">Adaptive immunity</keyword>
<keyword id="KW-0130">Cell adhesion</keyword>
<keyword id="KW-1003">Cell membrane</keyword>
<keyword id="KW-0966">Cell projection</keyword>
<keyword id="KW-1015">Disulfide bond</keyword>
<keyword id="KW-0325">Glycoprotein</keyword>
<keyword id="KW-0391">Immunity</keyword>
<keyword id="KW-0393">Immunoglobulin domain</keyword>
<keyword id="KW-0472">Membrane</keyword>
<keyword id="KW-1185">Reference proteome</keyword>
<keyword id="KW-0677">Repeat</keyword>
<keyword id="KW-0812">Transmembrane</keyword>
<keyword id="KW-1133">Transmembrane helix</keyword>
<comment type="function">
    <text evidence="1 2 3">Cell adhesion molecule that mediates both heterotypic cell-cell contacts via its interaction with CD6, as well as homotypic cell-cell contacts. Promotes T-cell activation and proliferation via its interactions with CD6 (By similarity). Contributes to the formation and maturation of the immunological synapse via its interactions with CD6 (By similarity). Mediates homotypic interactions with cells that express ALCAM. Mediates attachment of dendritic cells onto endothelial cells via homotypic interaction. Inhibits endothelial cell migration and promotes endothelial tube formation via homotypic interactions. Required for normal organization of the lymph vessel network. Required for normal hematopoietic stem cell engraftment in the bone marrow. Plays a role in hematopoiesis; required for normal numbers of hematopoietic stem cells in bone marrow. Promotes in vitro osteoblast proliferation and differentiation (By similarity). Promotes neurite extension, axon growth and axon guidance; axons grow preferentially on surfaces that contain ALCAM (By similarity). Mediates outgrowth and pathfinding for retinal ganglion cell axons (By similarity).</text>
</comment>
<comment type="subunit">
    <text evidence="2">Homodimer. Interacts (via extracellular domain) with CD6 (via extracellular domain). Homodimerization and interaction with CD6 involve the same region and cannot occur simultaneously. The affinity for CD6 is much higher than the affinity for self-association. Interacts (via glycosylated extracellular domain) with LGALS1 and LGALS3. Interaction with LGALS1 or LGALS3 inhibits interaction with CD6.</text>
</comment>
<comment type="subcellular location">
    <subcellularLocation>
        <location evidence="3">Cell membrane</location>
        <topology evidence="3">Single-pass type I membrane protein</topology>
    </subcellularLocation>
    <subcellularLocation>
        <location evidence="3">Cell projection</location>
        <location evidence="3">Axon</location>
    </subcellularLocation>
    <subcellularLocation>
        <location evidence="3">Cell projection</location>
        <location evidence="3">Dendrite</location>
    </subcellularLocation>
    <text evidence="2">Detected at the immunological synapse, i.e, at the contact zone between antigen-presenting dendritic cells and T-cells. Colocalizes with CD6 and the TCR/CD3 complex at the immunological synapse.</text>
</comment>
<comment type="domain">
    <text evidence="2">The CD6 binding site is located in the N-terminal Ig-like domain.</text>
</comment>
<comment type="PTM">
    <text evidence="2">Glycosylated.</text>
</comment>
<name>CD166_CANLF</name>
<accession>O46634</accession>
<organism>
    <name type="scientific">Canis lupus familiaris</name>
    <name type="common">Dog</name>
    <name type="synonym">Canis familiaris</name>
    <dbReference type="NCBI Taxonomy" id="9615"/>
    <lineage>
        <taxon>Eukaryota</taxon>
        <taxon>Metazoa</taxon>
        <taxon>Chordata</taxon>
        <taxon>Craniata</taxon>
        <taxon>Vertebrata</taxon>
        <taxon>Euteleostomi</taxon>
        <taxon>Mammalia</taxon>
        <taxon>Eutheria</taxon>
        <taxon>Laurasiatheria</taxon>
        <taxon>Carnivora</taxon>
        <taxon>Caniformia</taxon>
        <taxon>Canidae</taxon>
        <taxon>Canis</taxon>
    </lineage>
</organism>
<sequence>GSPVFIAFRSSTKKSVQYDDVPEYEDRLSLSENYTLSISNARISDEKRFVCMLVTEDNVFEAPTIVKVFKQPSKPEIVSKAPFLETEQLKKLGDCISKDSYPDGNITWYRNGKVLQPLEGVVVLIFKKQMDPVTQLYTMTSSLEYKATKADIQMQFTCSVTYYGPSGQKTVQSEQAIFDIYYPTEQVTIQVLPSKTAIKEGDIITLKCLGNGNPPPEEFLFYLPGQPEGIRSSNTYTLTDVRRNATGDYKCSLIDKKSMIASTAITVHYLDLSLNPSGEVTKQIGDALPVSCTISASRNATVVWMKDNIRLRSSPSFSSLQYQDAGNYVCETALQEVEGLKKRESLTLIVEGKPQIKMTKKTDPSGLSKTIICHVEGFPKPAIQWTITGSGSVINQTEESPYINGRYYSTIINSPEENVTLTCTAENQLERTVNSLNVSAISIPEHDEADEISDENREQVNHRATLIVGIVLRLLHGALVAGVVYWLYVKKSKTASKHVNKDLGNLEENKKLEQNNHRTEA</sequence>
<dbReference type="EMBL" id="Y13242">
    <property type="protein sequence ID" value="CAA73694.1"/>
    <property type="molecule type" value="mRNA"/>
</dbReference>
<dbReference type="SMR" id="O46634"/>
<dbReference type="FunCoup" id="O46634">
    <property type="interactions" value="158"/>
</dbReference>
<dbReference type="STRING" id="9615.ENSCAFP00000014280"/>
<dbReference type="GlyCosmos" id="O46634">
    <property type="glycosylation" value="7 sites, No reported glycans"/>
</dbReference>
<dbReference type="PaxDb" id="9612-ENSCAFP00000014280"/>
<dbReference type="eggNOG" id="ENOG502RMQM">
    <property type="taxonomic scope" value="Eukaryota"/>
</dbReference>
<dbReference type="InParanoid" id="O46634"/>
<dbReference type="OrthoDB" id="9945628at2759"/>
<dbReference type="Proteomes" id="UP000002254">
    <property type="component" value="Unplaced"/>
</dbReference>
<dbReference type="Proteomes" id="UP000694429">
    <property type="component" value="Unplaced"/>
</dbReference>
<dbReference type="Proteomes" id="UP000694542">
    <property type="component" value="Unplaced"/>
</dbReference>
<dbReference type="Proteomes" id="UP000805418">
    <property type="component" value="Unplaced"/>
</dbReference>
<dbReference type="GO" id="GO:0030424">
    <property type="term" value="C:axon"/>
    <property type="evidence" value="ECO:0000250"/>
    <property type="project" value="UniProtKB"/>
</dbReference>
<dbReference type="GO" id="GO:0030425">
    <property type="term" value="C:dendrite"/>
    <property type="evidence" value="ECO:0007669"/>
    <property type="project" value="UniProtKB-SubCell"/>
</dbReference>
<dbReference type="GO" id="GO:0001772">
    <property type="term" value="C:immunological synapse"/>
    <property type="evidence" value="ECO:0000250"/>
    <property type="project" value="UniProtKB"/>
</dbReference>
<dbReference type="GO" id="GO:0005886">
    <property type="term" value="C:plasma membrane"/>
    <property type="evidence" value="ECO:0000250"/>
    <property type="project" value="UniProtKB"/>
</dbReference>
<dbReference type="GO" id="GO:0002250">
    <property type="term" value="P:adaptive immune response"/>
    <property type="evidence" value="ECO:0007669"/>
    <property type="project" value="UniProtKB-KW"/>
</dbReference>
<dbReference type="GO" id="GO:0048846">
    <property type="term" value="P:axon extension involved in axon guidance"/>
    <property type="evidence" value="ECO:0000250"/>
    <property type="project" value="UniProtKB"/>
</dbReference>
<dbReference type="GO" id="GO:0007155">
    <property type="term" value="P:cell adhesion"/>
    <property type="evidence" value="ECO:0000250"/>
    <property type="project" value="UniProtKB"/>
</dbReference>
<dbReference type="GO" id="GO:0007157">
    <property type="term" value="P:heterophilic cell-cell adhesion via plasma membrane cell adhesion molecules"/>
    <property type="evidence" value="ECO:0000250"/>
    <property type="project" value="UniProtKB"/>
</dbReference>
<dbReference type="GO" id="GO:1990138">
    <property type="term" value="P:neuron projection extension"/>
    <property type="evidence" value="ECO:0000250"/>
    <property type="project" value="UniProtKB"/>
</dbReference>
<dbReference type="GO" id="GO:0031290">
    <property type="term" value="P:retinal ganglion cell axon guidance"/>
    <property type="evidence" value="ECO:0000250"/>
    <property type="project" value="UniProtKB"/>
</dbReference>
<dbReference type="CDD" id="cd00096">
    <property type="entry name" value="Ig"/>
    <property type="match status" value="2"/>
</dbReference>
<dbReference type="FunFam" id="2.60.40.10:FF:001428">
    <property type="entry name" value="CD166 antigen"/>
    <property type="match status" value="1"/>
</dbReference>
<dbReference type="FunFam" id="2.60.40.10:FF:000351">
    <property type="entry name" value="CD166 antigen isoform X1"/>
    <property type="match status" value="1"/>
</dbReference>
<dbReference type="FunFam" id="2.60.40.10:FF:000384">
    <property type="entry name" value="CD166 antigen isoform X1"/>
    <property type="match status" value="1"/>
</dbReference>
<dbReference type="FunFam" id="2.60.40.10:FF:000472">
    <property type="entry name" value="CD166 antigen isoform X2"/>
    <property type="match status" value="1"/>
</dbReference>
<dbReference type="Gene3D" id="2.60.40.10">
    <property type="entry name" value="Immunoglobulins"/>
    <property type="match status" value="5"/>
</dbReference>
<dbReference type="InterPro" id="IPR013162">
    <property type="entry name" value="CD80_C2-set"/>
</dbReference>
<dbReference type="InterPro" id="IPR007110">
    <property type="entry name" value="Ig-like_dom"/>
</dbReference>
<dbReference type="InterPro" id="IPR036179">
    <property type="entry name" value="Ig-like_dom_sf"/>
</dbReference>
<dbReference type="InterPro" id="IPR013783">
    <property type="entry name" value="Ig-like_fold"/>
</dbReference>
<dbReference type="InterPro" id="IPR003599">
    <property type="entry name" value="Ig_sub"/>
</dbReference>
<dbReference type="InterPro" id="IPR051116">
    <property type="entry name" value="Surface_Rcpt/Adhesion_Mol"/>
</dbReference>
<dbReference type="PANTHER" id="PTHR11973:SF2">
    <property type="entry name" value="CD166 ANTIGEN"/>
    <property type="match status" value="1"/>
</dbReference>
<dbReference type="PANTHER" id="PTHR11973">
    <property type="entry name" value="CELL SURFACE GLYCOPROTEIN MUC18-RELATED"/>
    <property type="match status" value="1"/>
</dbReference>
<dbReference type="Pfam" id="PF08205">
    <property type="entry name" value="C2-set_2"/>
    <property type="match status" value="1"/>
</dbReference>
<dbReference type="Pfam" id="PF13927">
    <property type="entry name" value="Ig_3"/>
    <property type="match status" value="2"/>
</dbReference>
<dbReference type="SMART" id="SM00409">
    <property type="entry name" value="IG"/>
    <property type="match status" value="2"/>
</dbReference>
<dbReference type="SUPFAM" id="SSF48726">
    <property type="entry name" value="Immunoglobulin"/>
    <property type="match status" value="4"/>
</dbReference>
<dbReference type="PROSITE" id="PS50835">
    <property type="entry name" value="IG_LIKE"/>
    <property type="match status" value="4"/>
</dbReference>
<gene>
    <name type="primary">ALCAM</name>
</gene>
<proteinExistence type="evidence at transcript level"/>
<evidence type="ECO:0000250" key="1">
    <source>
        <dbReference type="UniProtKB" id="P42292"/>
    </source>
</evidence>
<evidence type="ECO:0000250" key="2">
    <source>
        <dbReference type="UniProtKB" id="Q13740"/>
    </source>
</evidence>
<evidence type="ECO:0000250" key="3">
    <source>
        <dbReference type="UniProtKB" id="Q61490"/>
    </source>
</evidence>
<evidence type="ECO:0000255" key="4"/>
<evidence type="ECO:0000255" key="5">
    <source>
        <dbReference type="PROSITE-ProRule" id="PRU00114"/>
    </source>
</evidence>
<evidence type="ECO:0000256" key="6">
    <source>
        <dbReference type="SAM" id="MobiDB-lite"/>
    </source>
</evidence>
<evidence type="ECO:0000303" key="7">
    <source>
    </source>
</evidence>
<protein>
    <recommendedName>
        <fullName>CD166 antigen</fullName>
    </recommendedName>
    <alternativeName>
        <fullName>Activated leukocyte cell adhesion molecule</fullName>
    </alternativeName>
    <alternativeName>
        <fullName evidence="7">SB-10 antigen</fullName>
    </alternativeName>
    <cdAntigenName>CD166</cdAntigenName>
</protein>
<feature type="chain" id="PRO_0000072677" description="CD166 antigen">
    <location>
        <begin position="1" status="less than"/>
        <end position="521"/>
    </location>
</feature>
<feature type="topological domain" description="Extracellular" evidence="4">
    <location>
        <begin position="1" status="less than"/>
        <end position="465"/>
    </location>
</feature>
<feature type="transmembrane region" description="Helical" evidence="4">
    <location>
        <begin position="466"/>
        <end position="487"/>
    </location>
</feature>
<feature type="topological domain" description="Cytoplasmic" evidence="4">
    <location>
        <begin position="488"/>
        <end position="521"/>
    </location>
</feature>
<feature type="domain" description="Ig-like V-type 2">
    <location>
        <begin position="63"/>
        <end position="172"/>
    </location>
</feature>
<feature type="domain" description="Ig-like C2-type 1">
    <location>
        <begin position="183"/>
        <end position="266"/>
    </location>
</feature>
<feature type="domain" description="Ig-like C2-type 2">
    <location>
        <begin position="271"/>
        <end position="347"/>
    </location>
</feature>
<feature type="domain" description="Ig-like C2-type 3">
    <location>
        <begin position="354"/>
        <end position="439"/>
    </location>
</feature>
<feature type="region of interest" description="Disordered" evidence="6">
    <location>
        <begin position="500"/>
        <end position="521"/>
    </location>
</feature>
<feature type="compositionally biased region" description="Basic and acidic residues" evidence="6">
    <location>
        <begin position="507"/>
        <end position="521"/>
    </location>
</feature>
<feature type="glycosylation site" description="N-linked (GlcNAc...) asparagine" evidence="4">
    <location>
        <position position="33"/>
    </location>
</feature>
<feature type="glycosylation site" description="N-linked (GlcNAc...) asparagine" evidence="4">
    <location>
        <position position="105"/>
    </location>
</feature>
<feature type="glycosylation site" description="N-linked (GlcNAc...) asparagine" evidence="4">
    <location>
        <position position="244"/>
    </location>
</feature>
<feature type="glycosylation site" description="N-linked (GlcNAc...) asparagine" evidence="4">
    <location>
        <position position="299"/>
    </location>
</feature>
<feature type="glycosylation site" description="N-linked (GlcNAc...) asparagine" evidence="4">
    <location>
        <position position="395"/>
    </location>
</feature>
<feature type="glycosylation site" description="N-linked (GlcNAc...) asparagine" evidence="4">
    <location>
        <position position="418"/>
    </location>
</feature>
<feature type="glycosylation site" description="N-linked (GlcNAc...) asparagine" evidence="4">
    <location>
        <position position="437"/>
    </location>
</feature>
<feature type="disulfide bond" evidence="5">
    <location>
        <begin position="95"/>
        <end position="158"/>
    </location>
</feature>
<feature type="disulfide bond" evidence="5">
    <location>
        <begin position="208"/>
        <end position="251"/>
    </location>
</feature>
<feature type="disulfide bond" evidence="5">
    <location>
        <begin position="292"/>
        <end position="330"/>
    </location>
</feature>
<feature type="disulfide bond" evidence="5">
    <location>
        <begin position="373"/>
        <end position="423"/>
    </location>
</feature>
<feature type="non-terminal residue">
    <location>
        <position position="1"/>
    </location>
</feature>